<name>TRUB_STRMU</name>
<protein>
    <recommendedName>
        <fullName evidence="1">tRNA pseudouridine synthase B</fullName>
        <ecNumber evidence="1">5.4.99.25</ecNumber>
    </recommendedName>
    <alternativeName>
        <fullName evidence="1">tRNA pseudouridine(55) synthase</fullName>
        <shortName evidence="1">Psi55 synthase</shortName>
    </alternativeName>
    <alternativeName>
        <fullName evidence="1">tRNA pseudouridylate synthase</fullName>
    </alternativeName>
    <alternativeName>
        <fullName evidence="1">tRNA-uridine isomerase</fullName>
    </alternativeName>
</protein>
<accession>Q8DU15</accession>
<sequence length="293" mass="32959">MISGIINLKKEAGMTSHDAVFKLRKILKEKKIGHGGTLDPDVIGVLPIAVGKATRVLEYMTEAGKVYEGQITLGFSTTTEDASGELLQWTPVDETLSVELIDQAMTCFMGQITQVPPMYSAVKVNGKKLYEYARAGQEVERPQRQVRIYDFKRTSDLVFEDECCHFDFRVSCSKGTYIRTLAVDLGQKLGYASHMSFLKRTASAGLDLSQALTLAEIAEKVEEKDFSFLLPIEYGVLDLPRIDLNPKQTKEVSFGRRLKLLRQEELLAAFFENQLVAVLEKRDTSYKPKKVFL</sequence>
<comment type="function">
    <text evidence="1">Responsible for synthesis of pseudouridine from uracil-55 in the psi GC loop of transfer RNAs.</text>
</comment>
<comment type="catalytic activity">
    <reaction evidence="1">
        <text>uridine(55) in tRNA = pseudouridine(55) in tRNA</text>
        <dbReference type="Rhea" id="RHEA:42532"/>
        <dbReference type="Rhea" id="RHEA-COMP:10101"/>
        <dbReference type="Rhea" id="RHEA-COMP:10102"/>
        <dbReference type="ChEBI" id="CHEBI:65314"/>
        <dbReference type="ChEBI" id="CHEBI:65315"/>
        <dbReference type="EC" id="5.4.99.25"/>
    </reaction>
</comment>
<comment type="similarity">
    <text evidence="1">Belongs to the pseudouridine synthase TruB family. Type 1 subfamily.</text>
</comment>
<keyword id="KW-0413">Isomerase</keyword>
<keyword id="KW-1185">Reference proteome</keyword>
<keyword id="KW-0819">tRNA processing</keyword>
<reference key="1">
    <citation type="journal article" date="2002" name="Proc. Natl. Acad. Sci. U.S.A.">
        <title>Genome sequence of Streptococcus mutans UA159, a cariogenic dental pathogen.</title>
        <authorList>
            <person name="Ajdic D.J."/>
            <person name="McShan W.M."/>
            <person name="McLaughlin R.E."/>
            <person name="Savic G."/>
            <person name="Chang J."/>
            <person name="Carson M.B."/>
            <person name="Primeaux C."/>
            <person name="Tian R."/>
            <person name="Kenton S."/>
            <person name="Jia H.G."/>
            <person name="Lin S.P."/>
            <person name="Qian Y."/>
            <person name="Li S."/>
            <person name="Zhu H."/>
            <person name="Najar F.Z."/>
            <person name="Lai H."/>
            <person name="White J."/>
            <person name="Roe B.A."/>
            <person name="Ferretti J.J."/>
        </authorList>
    </citation>
    <scope>NUCLEOTIDE SEQUENCE [LARGE SCALE GENOMIC DNA]</scope>
    <source>
        <strain>ATCC 700610 / UA159</strain>
    </source>
</reference>
<organism>
    <name type="scientific">Streptococcus mutans serotype c (strain ATCC 700610 / UA159)</name>
    <dbReference type="NCBI Taxonomy" id="210007"/>
    <lineage>
        <taxon>Bacteria</taxon>
        <taxon>Bacillati</taxon>
        <taxon>Bacillota</taxon>
        <taxon>Bacilli</taxon>
        <taxon>Lactobacillales</taxon>
        <taxon>Streptococcaceae</taxon>
        <taxon>Streptococcus</taxon>
    </lineage>
</organism>
<feature type="chain" id="PRO_0000121914" description="tRNA pseudouridine synthase B">
    <location>
        <begin position="1"/>
        <end position="293"/>
    </location>
</feature>
<feature type="active site" description="Nucleophile" evidence="1">
    <location>
        <position position="39"/>
    </location>
</feature>
<gene>
    <name evidence="1" type="primary">truB</name>
    <name type="ordered locus">SMU_1144</name>
</gene>
<proteinExistence type="inferred from homology"/>
<evidence type="ECO:0000255" key="1">
    <source>
        <dbReference type="HAMAP-Rule" id="MF_01080"/>
    </source>
</evidence>
<dbReference type="EC" id="5.4.99.25" evidence="1"/>
<dbReference type="EMBL" id="AE014133">
    <property type="protein sequence ID" value="AAN58836.1"/>
    <property type="molecule type" value="Genomic_DNA"/>
</dbReference>
<dbReference type="RefSeq" id="NP_721530.1">
    <property type="nucleotide sequence ID" value="NC_004350.2"/>
</dbReference>
<dbReference type="RefSeq" id="WP_002262200.1">
    <property type="nucleotide sequence ID" value="NC_004350.2"/>
</dbReference>
<dbReference type="SMR" id="Q8DU15"/>
<dbReference type="STRING" id="210007.SMU_1144"/>
<dbReference type="KEGG" id="smu:SMU_1144"/>
<dbReference type="PATRIC" id="fig|210007.7.peg.1026"/>
<dbReference type="eggNOG" id="COG0130">
    <property type="taxonomic scope" value="Bacteria"/>
</dbReference>
<dbReference type="HOGENOM" id="CLU_032087_0_1_9"/>
<dbReference type="OrthoDB" id="9802309at2"/>
<dbReference type="PhylomeDB" id="Q8DU15"/>
<dbReference type="Proteomes" id="UP000002512">
    <property type="component" value="Chromosome"/>
</dbReference>
<dbReference type="GO" id="GO:0003723">
    <property type="term" value="F:RNA binding"/>
    <property type="evidence" value="ECO:0007669"/>
    <property type="project" value="InterPro"/>
</dbReference>
<dbReference type="GO" id="GO:0160148">
    <property type="term" value="F:tRNA pseudouridine(55) synthase activity"/>
    <property type="evidence" value="ECO:0007669"/>
    <property type="project" value="UniProtKB-EC"/>
</dbReference>
<dbReference type="GO" id="GO:1990481">
    <property type="term" value="P:mRNA pseudouridine synthesis"/>
    <property type="evidence" value="ECO:0007669"/>
    <property type="project" value="TreeGrafter"/>
</dbReference>
<dbReference type="GO" id="GO:0031119">
    <property type="term" value="P:tRNA pseudouridine synthesis"/>
    <property type="evidence" value="ECO:0007669"/>
    <property type="project" value="UniProtKB-UniRule"/>
</dbReference>
<dbReference type="CDD" id="cd02573">
    <property type="entry name" value="PseudoU_synth_EcTruB"/>
    <property type="match status" value="1"/>
</dbReference>
<dbReference type="FunFam" id="3.30.2350.10:FF:000011">
    <property type="entry name" value="tRNA pseudouridine synthase B"/>
    <property type="match status" value="1"/>
</dbReference>
<dbReference type="Gene3D" id="3.30.2350.10">
    <property type="entry name" value="Pseudouridine synthase"/>
    <property type="match status" value="1"/>
</dbReference>
<dbReference type="HAMAP" id="MF_01080">
    <property type="entry name" value="TruB_bact"/>
    <property type="match status" value="1"/>
</dbReference>
<dbReference type="InterPro" id="IPR020103">
    <property type="entry name" value="PsdUridine_synth_cat_dom_sf"/>
</dbReference>
<dbReference type="InterPro" id="IPR002501">
    <property type="entry name" value="PsdUridine_synth_N"/>
</dbReference>
<dbReference type="InterPro" id="IPR014780">
    <property type="entry name" value="tRNA_psdUridine_synth_TruB"/>
</dbReference>
<dbReference type="InterPro" id="IPR032819">
    <property type="entry name" value="TruB_C"/>
</dbReference>
<dbReference type="NCBIfam" id="TIGR00431">
    <property type="entry name" value="TruB"/>
    <property type="match status" value="1"/>
</dbReference>
<dbReference type="PANTHER" id="PTHR13767:SF2">
    <property type="entry name" value="PSEUDOURIDYLATE SYNTHASE TRUB1"/>
    <property type="match status" value="1"/>
</dbReference>
<dbReference type="PANTHER" id="PTHR13767">
    <property type="entry name" value="TRNA-PSEUDOURIDINE SYNTHASE"/>
    <property type="match status" value="1"/>
</dbReference>
<dbReference type="Pfam" id="PF16198">
    <property type="entry name" value="TruB_C_2"/>
    <property type="match status" value="1"/>
</dbReference>
<dbReference type="Pfam" id="PF01509">
    <property type="entry name" value="TruB_N"/>
    <property type="match status" value="1"/>
</dbReference>
<dbReference type="SUPFAM" id="SSF55120">
    <property type="entry name" value="Pseudouridine synthase"/>
    <property type="match status" value="1"/>
</dbReference>